<sequence length="261" mass="26852">MNGLISQACGSHRPRRPSSLGAVAILIAATLFATVVAGCGKKPTTASSPSPGSPSPEAQQILQDSSKATKGLHSVHVVVTVNNLSTLPFESVDADVTNQPQGNGQAVGNAKVRMKPNTPVVATEFLVTNKTMYTKRGGDYVSVGPAEKIYDPGIILDKDRGLGAVVGQVQNPTIQGRDAIDGLATVKVSGTIDAAVIDPIVPQLGKGGGRLPITLWIVDTNASTPAPAANLVRMVIDKDQGNVDITLSNWGAPVTIPNPAG</sequence>
<reference key="1">
    <citation type="journal article" date="2003" name="Proc. Natl. Acad. Sci. U.S.A.">
        <title>The complete genome sequence of Mycobacterium bovis.</title>
        <authorList>
            <person name="Garnier T."/>
            <person name="Eiglmeier K."/>
            <person name="Camus J.-C."/>
            <person name="Medina N."/>
            <person name="Mansoor H."/>
            <person name="Pryor M."/>
            <person name="Duthoy S."/>
            <person name="Grondin S."/>
            <person name="Lacroix C."/>
            <person name="Monsempe C."/>
            <person name="Simon S."/>
            <person name="Harris B."/>
            <person name="Atkin R."/>
            <person name="Doggett J."/>
            <person name="Mayes R."/>
            <person name="Keating L."/>
            <person name="Wheeler P.R."/>
            <person name="Parkhill J."/>
            <person name="Barrell B.G."/>
            <person name="Cole S.T."/>
            <person name="Gordon S.V."/>
            <person name="Hewinson R.G."/>
        </authorList>
    </citation>
    <scope>NUCLEOTIDE SEQUENCE [LARGE SCALE GENOMIC DNA]</scope>
    <source>
        <strain>ATCC BAA-935 / AF2122/97</strain>
    </source>
</reference>
<reference key="2">
    <citation type="journal article" date="2017" name="Genome Announc.">
        <title>Updated reference genome sequence and annotation of Mycobacterium bovis AF2122/97.</title>
        <authorList>
            <person name="Malone K.M."/>
            <person name="Farrell D."/>
            <person name="Stuber T.P."/>
            <person name="Schubert O.T."/>
            <person name="Aebersold R."/>
            <person name="Robbe-Austerman S."/>
            <person name="Gordon S.V."/>
        </authorList>
    </citation>
    <scope>NUCLEOTIDE SEQUENCE [LARGE SCALE GENOMIC DNA]</scope>
    <scope>GENOME REANNOTATION</scope>
    <source>
        <strain>ATCC BAA-935 / AF2122/97</strain>
    </source>
</reference>
<reference key="3">
    <citation type="journal article" date="2014" name="Acta Crystallogr. D">
        <title>Crystal structure and functional implications of LprF from Mycobacterium tuberculosis and M. bovis.</title>
        <authorList>
            <person name="Kim J.S."/>
            <person name="Jiao L."/>
            <person name="Oh J.I."/>
            <person name="Ha N.C."/>
            <person name="Kim Y.H."/>
        </authorList>
    </citation>
    <scope>X-RAY CRYSTALLOGRAPHY (1.10 ANGSTROMS) OF 40-261</scope>
    <scope>POSSIBLE FUNCTION</scope>
    <scope>SUBUNIT</scope>
    <scope>DOMAIN</scope>
    <scope>POSSIBLE LIPID-BINDING</scope>
    <scope>MUTAGENESIS OF ALA-110</scope>
    <scope>EXPRESSION IN M.SMEGMATIS</scope>
    <source>
        <strain>ATCC BAA-935 / AF2122/97</strain>
    </source>
</reference>
<accession>P65315</accession>
<accession>A0A1R3XY62</accession>
<accession>P71798</accession>
<accession>X2BHQ5</accession>
<feature type="signal peptide" evidence="2">
    <location>
        <begin position="1"/>
        <end position="38"/>
    </location>
</feature>
<feature type="chain" id="PRO_0000018142" description="Putative diacylated glycolipid transporter LprF">
    <location>
        <begin position="39"/>
        <end position="261"/>
    </location>
</feature>
<feature type="region of interest" description="Disordered" evidence="3">
    <location>
        <begin position="42"/>
        <end position="61"/>
    </location>
</feature>
<feature type="lipid moiety-binding region" description="N-palmitoyl cysteine" evidence="2">
    <location>
        <position position="39"/>
    </location>
</feature>
<feature type="lipid moiety-binding region" description="S-diacylglycerol cysteine" evidence="2">
    <location>
        <position position="39"/>
    </location>
</feature>
<feature type="mutagenesis site" description="Loss of glycolipid-binding, increased cell surface hydrophobicity, loss of slight ethambutol antibiotic resistance." evidence="4">
    <original>A</original>
    <variation>Y</variation>
    <location>
        <position position="110"/>
    </location>
</feature>
<feature type="helix" evidence="8">
    <location>
        <begin position="56"/>
        <end position="70"/>
    </location>
</feature>
<feature type="strand" evidence="8">
    <location>
        <begin position="73"/>
        <end position="83"/>
    </location>
</feature>
<feature type="strand" evidence="8">
    <location>
        <begin position="87"/>
        <end position="98"/>
    </location>
</feature>
<feature type="strand" evidence="8">
    <location>
        <begin position="104"/>
        <end position="112"/>
    </location>
</feature>
<feature type="strand" evidence="8">
    <location>
        <begin position="121"/>
        <end position="128"/>
    </location>
</feature>
<feature type="strand" evidence="8">
    <location>
        <begin position="131"/>
        <end position="136"/>
    </location>
</feature>
<feature type="strand" evidence="8">
    <location>
        <begin position="139"/>
        <end position="145"/>
    </location>
</feature>
<feature type="helix" evidence="8">
    <location>
        <begin position="146"/>
        <end position="148"/>
    </location>
</feature>
<feature type="helix" evidence="8">
    <location>
        <begin position="152"/>
        <end position="154"/>
    </location>
</feature>
<feature type="turn" evidence="8">
    <location>
        <begin position="158"/>
        <end position="160"/>
    </location>
</feature>
<feature type="helix" evidence="8">
    <location>
        <begin position="162"/>
        <end position="167"/>
    </location>
</feature>
<feature type="strand" evidence="8">
    <location>
        <begin position="170"/>
        <end position="182"/>
    </location>
</feature>
<feature type="strand" evidence="8">
    <location>
        <begin position="184"/>
        <end position="193"/>
    </location>
</feature>
<feature type="helix" evidence="8">
    <location>
        <begin position="194"/>
        <end position="197"/>
    </location>
</feature>
<feature type="turn" evidence="8">
    <location>
        <begin position="198"/>
        <end position="200"/>
    </location>
</feature>
<feature type="turn" evidence="8">
    <location>
        <begin position="202"/>
        <end position="207"/>
    </location>
</feature>
<feature type="strand" evidence="8">
    <location>
        <begin position="209"/>
        <end position="218"/>
    </location>
</feature>
<feature type="strand" evidence="8">
    <location>
        <begin position="222"/>
        <end position="225"/>
    </location>
</feature>
<feature type="strand" evidence="8">
    <location>
        <begin position="231"/>
        <end position="238"/>
    </location>
</feature>
<feature type="strand" evidence="8">
    <location>
        <begin position="241"/>
        <end position="249"/>
    </location>
</feature>
<gene>
    <name type="primary">lprF</name>
    <name type="ordered locus">BQ2027_MB1403</name>
</gene>
<protein>
    <recommendedName>
        <fullName evidence="5">Putative diacylated glycolipid transporter LprF</fullName>
    </recommendedName>
    <alternativeName>
        <fullName>Lipoprotein LprF</fullName>
    </alternativeName>
</protein>
<organism>
    <name type="scientific">Mycobacterium bovis (strain ATCC BAA-935 / AF2122/97)</name>
    <dbReference type="NCBI Taxonomy" id="233413"/>
    <lineage>
        <taxon>Bacteria</taxon>
        <taxon>Bacillati</taxon>
        <taxon>Actinomycetota</taxon>
        <taxon>Actinomycetes</taxon>
        <taxon>Mycobacteriales</taxon>
        <taxon>Mycobacteriaceae</taxon>
        <taxon>Mycobacterium</taxon>
        <taxon>Mycobacterium tuberculosis complex</taxon>
    </lineage>
</organism>
<dbReference type="EMBL" id="LT708304">
    <property type="protein sequence ID" value="SIU00007.1"/>
    <property type="molecule type" value="Genomic_DNA"/>
</dbReference>
<dbReference type="RefSeq" id="NP_855057.1">
    <property type="nucleotide sequence ID" value="NC_002945.3"/>
</dbReference>
<dbReference type="RefSeq" id="WP_003407180.1">
    <property type="nucleotide sequence ID" value="NC_002945.4"/>
</dbReference>
<dbReference type="PDB" id="4QA8">
    <property type="method" value="X-ray"/>
    <property type="resolution" value="1.10 A"/>
    <property type="chains" value="A=40-261"/>
</dbReference>
<dbReference type="PDBsum" id="4QA8"/>
<dbReference type="SMR" id="P65315"/>
<dbReference type="KEGG" id="mbo:BQ2027_MB1403"/>
<dbReference type="PATRIC" id="fig|233413.5.peg.1539"/>
<dbReference type="Proteomes" id="UP000001419">
    <property type="component" value="Chromosome"/>
</dbReference>
<dbReference type="GO" id="GO:0005886">
    <property type="term" value="C:plasma membrane"/>
    <property type="evidence" value="ECO:0007669"/>
    <property type="project" value="UniProtKB-SubCell"/>
</dbReference>
<dbReference type="GO" id="GO:0008289">
    <property type="term" value="F:lipid binding"/>
    <property type="evidence" value="ECO:0007669"/>
    <property type="project" value="UniProtKB-KW"/>
</dbReference>
<dbReference type="GO" id="GO:0006869">
    <property type="term" value="P:lipid transport"/>
    <property type="evidence" value="ECO:0007669"/>
    <property type="project" value="UniProtKB-KW"/>
</dbReference>
<dbReference type="CDD" id="cd16334">
    <property type="entry name" value="LppX-like"/>
    <property type="match status" value="1"/>
</dbReference>
<dbReference type="Gene3D" id="2.50.20.20">
    <property type="match status" value="1"/>
</dbReference>
<dbReference type="InterPro" id="IPR029046">
    <property type="entry name" value="LolA/LolB/LppX"/>
</dbReference>
<dbReference type="InterPro" id="IPR009830">
    <property type="entry name" value="LppX/LprAFG"/>
</dbReference>
<dbReference type="Pfam" id="PF07161">
    <property type="entry name" value="LppX_LprAFG"/>
    <property type="match status" value="1"/>
</dbReference>
<dbReference type="SUPFAM" id="SSF89392">
    <property type="entry name" value="Prokaryotic lipoproteins and lipoprotein localization factors"/>
    <property type="match status" value="1"/>
</dbReference>
<proteinExistence type="evidence at protein level"/>
<keyword id="KW-0002">3D-structure</keyword>
<keyword id="KW-1003">Cell membrane</keyword>
<keyword id="KW-0445">Lipid transport</keyword>
<keyword id="KW-0446">Lipid-binding</keyword>
<keyword id="KW-0449">Lipoprotein</keyword>
<keyword id="KW-0472">Membrane</keyword>
<keyword id="KW-0564">Palmitate</keyword>
<keyword id="KW-1185">Reference proteome</keyword>
<keyword id="KW-0732">Signal</keyword>
<keyword id="KW-0813">Transport</keyword>
<name>LPRF_MYCBO</name>
<comment type="function">
    <text evidence="7">Might be involved in transporting short diacylated glycolipids to the cell outer membrane. Binds glycolipids that contain a diacylated glycerophosphate or a diacylated phosphatidylinositol moiety with C14 and C16 chains (upon overexpression in M.smegmatis; M.smegmatis does not encode this gene). Overexpression in M.smegmatis increases the cell wall glycolipid LAM/LM ratio (lipoarabinomannan/lipomannan), suggesting perhaps this protein is involved in the preferential translocation of diacylated LAM to the outer cell membrane. Overexpressing M.smegmatis cells adhere less well to hexadecane droplets, indicating decrease in the hydrophobicity of the cell surface, and have a slightly increased resistance to the antibiotic ethambutol.</text>
</comment>
<comment type="subunit">
    <text evidence="7">Monomer.</text>
</comment>
<comment type="subcellular location">
    <subcellularLocation>
        <location evidence="6">Cell membrane</location>
        <topology evidence="6">Lipid-anchor</topology>
    </subcellularLocation>
</comment>
<comment type="domain">
    <text evidence="7">Forms a U-shaped beta-half-barrel with a small hydrophobic cavity (933 Angstroms(3)) which is large enough to hold a single diacylated glycolipid molecule.</text>
</comment>
<comment type="PTM">
    <text evidence="1">Modified by Lgt on Cys-39 with an S-linked diacylglycerol with a mixture of C16, C18 and C19 fatty acids (palmitic, stearic and tuberculostearic acid respectively), signal peptide is removed by LspA, modified by Lnt with an amide-linked mixture of C16 and C19 fatty acids (By similarity).</text>
</comment>
<comment type="similarity">
    <text evidence="6">Belongs to the LppX/LprAFG lipoprotein family.</text>
</comment>
<evidence type="ECO:0000250" key="1">
    <source>
        <dbReference type="UniProtKB" id="P9WK47"/>
    </source>
</evidence>
<evidence type="ECO:0000255" key="2"/>
<evidence type="ECO:0000256" key="3">
    <source>
        <dbReference type="SAM" id="MobiDB-lite"/>
    </source>
</evidence>
<evidence type="ECO:0000269" key="4">
    <source>
    </source>
</evidence>
<evidence type="ECO:0000303" key="5">
    <source>
    </source>
</evidence>
<evidence type="ECO:0000305" key="6"/>
<evidence type="ECO:0000305" key="7">
    <source>
    </source>
</evidence>
<evidence type="ECO:0007829" key="8">
    <source>
        <dbReference type="PDB" id="4QA8"/>
    </source>
</evidence>